<accession>P27390</accession>
<accession>Q3T4M6</accession>
<name>VP34_BPPRD</name>
<organismHost>
    <name type="scientific">Acinetobacter calcoaceticus</name>
    <dbReference type="NCBI Taxonomy" id="471"/>
</organismHost>
<organismHost>
    <name type="scientific">Escherichia coli</name>
    <dbReference type="NCBI Taxonomy" id="562"/>
</organismHost>
<organismHost>
    <name type="scientific">Proteus mirabilis</name>
    <dbReference type="NCBI Taxonomy" id="584"/>
</organismHost>
<organismHost>
    <name type="scientific">Pseudomonas aeruginosa</name>
    <dbReference type="NCBI Taxonomy" id="287"/>
</organismHost>
<organismHost>
    <name type="scientific">Pseudomonas fluorescens</name>
    <dbReference type="NCBI Taxonomy" id="294"/>
</organismHost>
<organismHost>
    <name type="scientific">Pseudomonas putida</name>
    <name type="common">Arthrobacter siderocapsulatus</name>
    <dbReference type="NCBI Taxonomy" id="303"/>
</organismHost>
<organismHost>
    <name type="scientific">Salmonella typhimurium</name>
    <dbReference type="NCBI Taxonomy" id="90371"/>
</organismHost>
<organismHost>
    <name type="scientific">Vibrio cholerae</name>
    <dbReference type="NCBI Taxonomy" id="666"/>
</organismHost>
<organism>
    <name type="scientific">Enterobacteria phage PRD1</name>
    <name type="common">Bacteriophage PRD1</name>
    <dbReference type="NCBI Taxonomy" id="10658"/>
    <lineage>
        <taxon>Viruses</taxon>
        <taxon>Varidnaviria</taxon>
        <taxon>Bamfordvirae</taxon>
        <taxon>Preplasmiviricota</taxon>
        <taxon>Tectiliviricetes</taxon>
        <taxon>Kalamavirales</taxon>
        <taxon>Tectiviridae</taxon>
        <taxon>Alphatectivirus</taxon>
        <taxon>Alphatectivirus PRD1</taxon>
    </lineage>
</organism>
<comment type="subcellular location">
    <subcellularLocation>
        <location evidence="2">Virion membrane</location>
        <topology evidence="2">Multi-pass membrane protein</topology>
    </subcellularLocation>
    <text evidence="2">Part of the capsid inner membrane.</text>
</comment>
<feature type="chain" id="PRO_0000165361" description="Protein P34">
    <location>
        <begin position="1"/>
        <end position="68"/>
    </location>
</feature>
<feature type="transmembrane region" description="Helical" evidence="1">
    <location>
        <begin position="4"/>
        <end position="24"/>
    </location>
</feature>
<feature type="transmembrane region" description="Helical" evidence="1">
    <location>
        <begin position="41"/>
        <end position="61"/>
    </location>
</feature>
<keyword id="KW-1231">Capsid inner membrane protein</keyword>
<keyword id="KW-0903">Direct protein sequencing</keyword>
<keyword id="KW-0472">Membrane</keyword>
<keyword id="KW-1185">Reference proteome</keyword>
<keyword id="KW-0812">Transmembrane</keyword>
<keyword id="KW-1133">Transmembrane helix</keyword>
<keyword id="KW-0946">Virion</keyword>
<sequence length="68" mass="6695">MNDFVGPIVTVLTAIIGVAILAVLVSRNSNTAGVIKAGSGGFSSMLGTALSPVTGGTGFAMTNNYSGF</sequence>
<evidence type="ECO:0000255" key="1"/>
<evidence type="ECO:0000305" key="2"/>
<dbReference type="EMBL" id="AY848689">
    <property type="protein sequence ID" value="AAX45921.1"/>
    <property type="molecule type" value="Genomic_DNA"/>
</dbReference>
<dbReference type="PIR" id="G36776">
    <property type="entry name" value="WMBPUB"/>
</dbReference>
<dbReference type="RefSeq" id="NP_040696.1">
    <property type="nucleotide sequence ID" value="NC_001421.2"/>
</dbReference>
<dbReference type="RefSeq" id="YP_009639974.1">
    <property type="nucleotide sequence ID" value="NC_001421.2"/>
</dbReference>
<dbReference type="SMR" id="P27390"/>
<dbReference type="GeneID" id="1260927"/>
<dbReference type="OrthoDB" id="35761at10239"/>
<dbReference type="Proteomes" id="UP000002143">
    <property type="component" value="Segment"/>
</dbReference>
<dbReference type="GO" id="GO:0016020">
    <property type="term" value="C:membrane"/>
    <property type="evidence" value="ECO:0007669"/>
    <property type="project" value="UniProtKB-KW"/>
</dbReference>
<dbReference type="GO" id="GO:0039641">
    <property type="term" value="C:viral inner membrane"/>
    <property type="evidence" value="ECO:0007669"/>
    <property type="project" value="UniProtKB-KW"/>
</dbReference>
<dbReference type="GO" id="GO:0055036">
    <property type="term" value="C:virion membrane"/>
    <property type="evidence" value="ECO:0007669"/>
    <property type="project" value="UniProtKB-SubCell"/>
</dbReference>
<dbReference type="InterPro" id="IPR020085">
    <property type="entry name" value="DNA_delivery_prot_P32/34"/>
</dbReference>
<dbReference type="Pfam" id="PF11087">
    <property type="entry name" value="PRD1_DD"/>
    <property type="match status" value="1"/>
</dbReference>
<proteinExistence type="evidence at protein level"/>
<gene>
    <name type="primary">XXXIV</name>
    <name type="synonym">O</name>
</gene>
<reference key="1">
    <citation type="journal article" date="1991" name="Virology">
        <title>Genome organization of membrane-containing bacteriophage PRD1.</title>
        <authorList>
            <person name="Bamford J.K.H."/>
            <person name="Haenninen A.-L."/>
            <person name="Pakula T.M."/>
            <person name="Ojala P.M."/>
            <person name="Kalkkinen N."/>
            <person name="Frilander M."/>
            <person name="Bamford D.H."/>
        </authorList>
    </citation>
    <scope>NUCLEOTIDE SEQUENCE [GENOMIC DNA]</scope>
    <scope>PROTEIN SEQUENCE OF 61-68</scope>
</reference>
<reference key="2">
    <citation type="journal article" date="2005" name="J. Mol. Biol.">
        <title>A snapshot of viral evolution from genome analysis of the tectiviridae family.</title>
        <authorList>
            <person name="Saren A.M."/>
            <person name="Ravantti J.J."/>
            <person name="Benson S.D."/>
            <person name="Burnett R.M."/>
            <person name="Paulin L."/>
            <person name="Bamford D.H."/>
            <person name="Bamford J.K.H."/>
        </authorList>
    </citation>
    <scope>NUCLEOTIDE SEQUENCE [GENOMIC DNA]</scope>
</reference>
<protein>
    <recommendedName>
        <fullName>Protein P34</fullName>
        <shortName>Protein O</shortName>
    </recommendedName>
    <alternativeName>
        <fullName>GpO</fullName>
    </alternativeName>
</protein>